<organism>
    <name type="scientific">Nostoc sp. (strain PCC 7120 / SAG 25.82 / UTEX 2576)</name>
    <dbReference type="NCBI Taxonomy" id="103690"/>
    <lineage>
        <taxon>Bacteria</taxon>
        <taxon>Bacillati</taxon>
        <taxon>Cyanobacteriota</taxon>
        <taxon>Cyanophyceae</taxon>
        <taxon>Nostocales</taxon>
        <taxon>Nostocaceae</taxon>
        <taxon>Nostoc</taxon>
    </lineage>
</organism>
<protein>
    <recommendedName>
        <fullName evidence="1">UPF0182 protein alr1037</fullName>
    </recommendedName>
</protein>
<keyword id="KW-1003">Cell membrane</keyword>
<keyword id="KW-0472">Membrane</keyword>
<keyword id="KW-1185">Reference proteome</keyword>
<keyword id="KW-0812">Transmembrane</keyword>
<keyword id="KW-1133">Transmembrane helix</keyword>
<comment type="subcellular location">
    <subcellularLocation>
        <location evidence="1">Cell membrane</location>
        <topology evidence="1">Multi-pass membrane protein</topology>
    </subcellularLocation>
</comment>
<comment type="similarity">
    <text evidence="1">Belongs to the UPF0182 family.</text>
</comment>
<comment type="sequence caution" evidence="2">
    <conflict type="erroneous termination">
        <sequence resource="EMBL-CDS" id="BAB72994"/>
    </conflict>
    <text>Truncated C-terminus.</text>
</comment>
<dbReference type="EMBL" id="BA000019">
    <property type="protein sequence ID" value="BAB72994.1"/>
    <property type="status" value="ALT_SEQ"/>
    <property type="molecule type" value="Genomic_DNA"/>
</dbReference>
<dbReference type="PIR" id="AB1936">
    <property type="entry name" value="AB1936"/>
</dbReference>
<dbReference type="STRING" id="103690.gene:10493051"/>
<dbReference type="KEGG" id="ana:alr1037"/>
<dbReference type="eggNOG" id="COG1615">
    <property type="taxonomic scope" value="Bacteria"/>
</dbReference>
<dbReference type="Proteomes" id="UP000002483">
    <property type="component" value="Chromosome"/>
</dbReference>
<dbReference type="GO" id="GO:0005576">
    <property type="term" value="C:extracellular region"/>
    <property type="evidence" value="ECO:0007669"/>
    <property type="project" value="TreeGrafter"/>
</dbReference>
<dbReference type="GO" id="GO:0005886">
    <property type="term" value="C:plasma membrane"/>
    <property type="evidence" value="ECO:0007669"/>
    <property type="project" value="UniProtKB-SubCell"/>
</dbReference>
<dbReference type="HAMAP" id="MF_01600">
    <property type="entry name" value="UPF0182"/>
    <property type="match status" value="1"/>
</dbReference>
<dbReference type="InterPro" id="IPR005372">
    <property type="entry name" value="UPF0182"/>
</dbReference>
<dbReference type="NCBIfam" id="NF002707">
    <property type="entry name" value="PRK02509.1"/>
    <property type="match status" value="1"/>
</dbReference>
<dbReference type="PANTHER" id="PTHR39344">
    <property type="entry name" value="UPF0182 PROTEIN SLL1060"/>
    <property type="match status" value="1"/>
</dbReference>
<dbReference type="PANTHER" id="PTHR39344:SF1">
    <property type="entry name" value="UPF0182 PROTEIN SLL1060"/>
    <property type="match status" value="1"/>
</dbReference>
<dbReference type="Pfam" id="PF03699">
    <property type="entry name" value="UPF0182"/>
    <property type="match status" value="1"/>
</dbReference>
<sequence length="1002" mass="114513">MFWKWCFRLSIVFVGLWLLLDLSSRLGAEVFWFREVGYLQVFLLRLVSRGVLWVVAAGVTAVYLWGNLALAQRLKYPRSLKIAEVRREEAELSVGLKNFLSPQYSRLNAPKINDAGHLKPFRLRWLLPLAFVFSLLAGLILVHYGKIALAYWYPAFNKNSLPIITPFRLETIWELGRQVFSQVLYLGLIVGIAIAILIYSQFFLRAIAVVLSVVFGTILFYNWAKVLQYFFPTPFNSTEPLFGKDISFYIFSLPLWELLELWLMGMFLYGFIAVTLTYLLSADSLSQGIFPGFSPQQQRHLYGMGGLLMLMVAFSYWLSRYELVYSPRGVSYGASYTDVVVQLPIYNILCVLGLAIAFYLLWRTIFWRAKSQYRQFVFYGLGAYLFVVVAAGSVLPTIVQYLIVQPNELQREQTYIQRTIALTRQAFGLETIDARTFNPQGDLTTAAIQANDLTIRNIRLWDQRPLLETNRQLQQFRPYYRFPDADIDRYTLEAEAAANRPASANQSPAPAEIAATERRQVLIAARELDYSAVPEQAQTWINQHLIYTHGYGFTMSPVNTVGPGGLPEYFVKDIAGSNEGALSTSSEAVRDSIPIGQPRIYYGEITNTYVMTGTRVRELDYPSGSDNAYNSYSGLGGIVIGSGWRKGLFAMYLKDWQMLFTRDFLPETKVLFRRNVKSRIQAIAPFLKFDSDPYLVSADGSPAFSGRDNYLYWMVDAYTTSDRYPYSDPDNNGINYIRNSVKIVIDAYNGSVKFYIADPTDPIIATWSAIFPGMFQPLSDMPVTLRSHIRYPLDYFAIQSERLMTYHMTDTQVFYNREDQWQIPNEIYGSESRPVEPYYLITSLPTVPFEEFILLLPYTPKQRTNLIAWLAARSDGENYGKLLLYNFPKERLVYGTEQIEARINQDPVISQQISLWNRQGSRAIQGNLLVIPIEQSLLYVEPIYLEATQNSLPTLVRVVVAYENRIVMAQTLEQALQAIFQPEVTPAPAIIRPFEEGTTPDS</sequence>
<accession>P58612</accession>
<reference key="1">
    <citation type="journal article" date="2001" name="DNA Res.">
        <title>Complete genomic sequence of the filamentous nitrogen-fixing cyanobacterium Anabaena sp. strain PCC 7120.</title>
        <authorList>
            <person name="Kaneko T."/>
            <person name="Nakamura Y."/>
            <person name="Wolk C.P."/>
            <person name="Kuritz T."/>
            <person name="Sasamoto S."/>
            <person name="Watanabe A."/>
            <person name="Iriguchi M."/>
            <person name="Ishikawa A."/>
            <person name="Kawashima K."/>
            <person name="Kimura T."/>
            <person name="Kishida Y."/>
            <person name="Kohara M."/>
            <person name="Matsumoto M."/>
            <person name="Matsuno A."/>
            <person name="Muraki A."/>
            <person name="Nakazaki N."/>
            <person name="Shimpo S."/>
            <person name="Sugimoto M."/>
            <person name="Takazawa M."/>
            <person name="Yamada M."/>
            <person name="Yasuda M."/>
            <person name="Tabata S."/>
        </authorList>
    </citation>
    <scope>NUCLEOTIDE SEQUENCE [LARGE SCALE GENOMIC DNA]</scope>
    <source>
        <strain>PCC 7120 / SAG 25.82 / UTEX 2576</strain>
    </source>
</reference>
<feature type="chain" id="PRO_0000157711" description="UPF0182 protein alr1037">
    <location>
        <begin position="1"/>
        <end position="1002"/>
    </location>
</feature>
<feature type="transmembrane region" description="Helical" evidence="1">
    <location>
        <begin position="7"/>
        <end position="29"/>
    </location>
</feature>
<feature type="transmembrane region" description="Helical" evidence="1">
    <location>
        <begin position="49"/>
        <end position="71"/>
    </location>
</feature>
<feature type="transmembrane region" description="Helical" evidence="1">
    <location>
        <begin position="123"/>
        <end position="145"/>
    </location>
</feature>
<feature type="transmembrane region" description="Helical" evidence="1">
    <location>
        <begin position="178"/>
        <end position="200"/>
    </location>
</feature>
<feature type="transmembrane region" description="Helical" evidence="1">
    <location>
        <begin position="202"/>
        <end position="224"/>
    </location>
</feature>
<feature type="transmembrane region" description="Helical" evidence="1">
    <location>
        <begin position="258"/>
        <end position="280"/>
    </location>
</feature>
<feature type="transmembrane region" description="Helical" evidence="1">
    <location>
        <begin position="300"/>
        <end position="319"/>
    </location>
</feature>
<feature type="transmembrane region" description="Helical" evidence="1">
    <location>
        <begin position="339"/>
        <end position="361"/>
    </location>
</feature>
<feature type="transmembrane region" description="Helical" evidence="1">
    <location>
        <begin position="382"/>
        <end position="404"/>
    </location>
</feature>
<evidence type="ECO:0000255" key="1">
    <source>
        <dbReference type="HAMAP-Rule" id="MF_01600"/>
    </source>
</evidence>
<evidence type="ECO:0000305" key="2"/>
<proteinExistence type="inferred from homology"/>
<gene>
    <name type="ordered locus">alr1037</name>
</gene>
<name>Y1037_NOSS1</name>